<proteinExistence type="evidence at transcript level"/>
<evidence type="ECO:0000250" key="1"/>
<evidence type="ECO:0000255" key="2"/>
<evidence type="ECO:0000305" key="3"/>
<dbReference type="EC" id="2.4.1.-"/>
<dbReference type="EMBL" id="AF417475">
    <property type="protein sequence ID" value="AAL50624.1"/>
    <property type="status" value="ALT_INIT"/>
    <property type="molecule type" value="mRNA"/>
</dbReference>
<dbReference type="EMBL" id="AC006920">
    <property type="protein sequence ID" value="AAD22287.1"/>
    <property type="molecule type" value="Genomic_DNA"/>
</dbReference>
<dbReference type="EMBL" id="CP002685">
    <property type="protein sequence ID" value="AEC06394.1"/>
    <property type="molecule type" value="Genomic_DNA"/>
</dbReference>
<dbReference type="PIR" id="B84528">
    <property type="entry name" value="B84528"/>
</dbReference>
<dbReference type="RefSeq" id="NP_179139.1">
    <property type="nucleotide sequence ID" value="NM_127097.2"/>
</dbReference>
<dbReference type="SMR" id="Q9SJP4"/>
<dbReference type="STRING" id="3702.Q9SJP4"/>
<dbReference type="CAZy" id="GT37">
    <property type="family name" value="Glycosyltransferase Family 37"/>
</dbReference>
<dbReference type="GlyCosmos" id="Q9SJP4">
    <property type="glycosylation" value="5 sites, No reported glycans"/>
</dbReference>
<dbReference type="GlyGen" id="Q9SJP4">
    <property type="glycosylation" value="5 sites"/>
</dbReference>
<dbReference type="PaxDb" id="3702-AT2G15370.1"/>
<dbReference type="ProteomicsDB" id="230005"/>
<dbReference type="EnsemblPlants" id="AT2G15370.1">
    <property type="protein sequence ID" value="AT2G15370.1"/>
    <property type="gene ID" value="AT2G15370"/>
</dbReference>
<dbReference type="GeneID" id="816029"/>
<dbReference type="Gramene" id="AT2G15370.1">
    <property type="protein sequence ID" value="AT2G15370.1"/>
    <property type="gene ID" value="AT2G15370"/>
</dbReference>
<dbReference type="KEGG" id="ath:AT2G15370"/>
<dbReference type="Araport" id="AT2G15370"/>
<dbReference type="TAIR" id="AT2G15370">
    <property type="gene designation" value="FUT5"/>
</dbReference>
<dbReference type="eggNOG" id="ENOG502SC60">
    <property type="taxonomic scope" value="Eukaryota"/>
</dbReference>
<dbReference type="HOGENOM" id="CLU_001992_2_1_1"/>
<dbReference type="InParanoid" id="Q9SJP4"/>
<dbReference type="OMA" id="CEKDQSL"/>
<dbReference type="PhylomeDB" id="Q9SJP4"/>
<dbReference type="BioCyc" id="ARA:AT2G15370-MONOMER"/>
<dbReference type="UniPathway" id="UPA00378"/>
<dbReference type="PRO" id="PR:Q9SJP4"/>
<dbReference type="Proteomes" id="UP000006548">
    <property type="component" value="Chromosome 2"/>
</dbReference>
<dbReference type="ExpressionAtlas" id="Q9SJP4">
    <property type="expression patterns" value="baseline and differential"/>
</dbReference>
<dbReference type="GO" id="GO:0032580">
    <property type="term" value="C:Golgi cisterna membrane"/>
    <property type="evidence" value="ECO:0007669"/>
    <property type="project" value="UniProtKB-SubCell"/>
</dbReference>
<dbReference type="GO" id="GO:0008417">
    <property type="term" value="F:fucosyltransferase activity"/>
    <property type="evidence" value="ECO:0000250"/>
    <property type="project" value="TAIR"/>
</dbReference>
<dbReference type="GO" id="GO:0008107">
    <property type="term" value="F:galactoside 2-alpha-L-fucosyltransferase activity"/>
    <property type="evidence" value="ECO:0007669"/>
    <property type="project" value="InterPro"/>
</dbReference>
<dbReference type="GO" id="GO:0042546">
    <property type="term" value="P:cell wall biogenesis"/>
    <property type="evidence" value="ECO:0007669"/>
    <property type="project" value="InterPro"/>
</dbReference>
<dbReference type="GO" id="GO:0071555">
    <property type="term" value="P:cell wall organization"/>
    <property type="evidence" value="ECO:0007669"/>
    <property type="project" value="UniProtKB-KW"/>
</dbReference>
<dbReference type="GO" id="GO:0006486">
    <property type="term" value="P:protein glycosylation"/>
    <property type="evidence" value="ECO:0007669"/>
    <property type="project" value="UniProtKB-UniPathway"/>
</dbReference>
<dbReference type="FunFam" id="3.40.50.11340:FF:000005">
    <property type="entry name" value="Galactoside 2-alpha-L-fucosyltransferase"/>
    <property type="match status" value="1"/>
</dbReference>
<dbReference type="Gene3D" id="3.40.50.11340">
    <property type="match status" value="1"/>
</dbReference>
<dbReference type="InterPro" id="IPR004938">
    <property type="entry name" value="XG_FTase"/>
</dbReference>
<dbReference type="PANTHER" id="PTHR31889:SF45">
    <property type="entry name" value="FUCOSYLTRANSFERASE 10-RELATED"/>
    <property type="match status" value="1"/>
</dbReference>
<dbReference type="PANTHER" id="PTHR31889">
    <property type="entry name" value="FUCOSYLTRANSFERASE 2-RELATED"/>
    <property type="match status" value="1"/>
</dbReference>
<dbReference type="Pfam" id="PF03254">
    <property type="entry name" value="XG_FTase"/>
    <property type="match status" value="1"/>
</dbReference>
<comment type="function">
    <text>May be involved in cell wall biosynthesis. May act as a fucosyltransferase.</text>
</comment>
<comment type="pathway">
    <text>Protein modification; protein glycosylation.</text>
</comment>
<comment type="subcellular location">
    <subcellularLocation>
        <location evidence="1">Golgi apparatus</location>
        <location evidence="1">Golgi stack membrane</location>
        <topology evidence="1">Single-pass type II membrane protein</topology>
    </subcellularLocation>
    <text evidence="1">Membrane-bound form in trans cisternae of Golgi.</text>
</comment>
<comment type="tissue specificity">
    <text>Expressed in roots, leaves, flowers and siliques.</text>
</comment>
<comment type="similarity">
    <text evidence="3">Belongs to the glycosyltransferase 37 family.</text>
</comment>
<comment type="sequence caution" evidence="3">
    <conflict type="erroneous initiation">
        <sequence resource="EMBL-CDS" id="AAL50624"/>
    </conflict>
</comment>
<feature type="chain" id="PRO_0000193914" description="Probable fucosyltransferase 5">
    <location>
        <begin position="1"/>
        <end position="533"/>
    </location>
</feature>
<feature type="topological domain" description="Cytoplasmic" evidence="2">
    <location>
        <begin position="1"/>
        <end position="13"/>
    </location>
</feature>
<feature type="transmembrane region" description="Helical; Signal-anchor for type II membrane protein" evidence="2">
    <location>
        <begin position="14"/>
        <end position="34"/>
    </location>
</feature>
<feature type="topological domain" description="Lumenal" evidence="2">
    <location>
        <begin position="35"/>
        <end position="533"/>
    </location>
</feature>
<feature type="glycosylation site" description="N-linked (GlcNAc...) asparagine" evidence="2">
    <location>
        <position position="202"/>
    </location>
</feature>
<feature type="glycosylation site" description="N-linked (GlcNAc...) asparagine" evidence="2">
    <location>
        <position position="227"/>
    </location>
</feature>
<feature type="glycosylation site" description="N-linked (GlcNAc...) asparagine" evidence="2">
    <location>
        <position position="374"/>
    </location>
</feature>
<feature type="glycosylation site" description="N-linked (GlcNAc...) asparagine" evidence="2">
    <location>
        <position position="396"/>
    </location>
</feature>
<feature type="glycosylation site" description="N-linked (GlcNAc...) asparagine" evidence="2">
    <location>
        <position position="475"/>
    </location>
</feature>
<organism>
    <name type="scientific">Arabidopsis thaliana</name>
    <name type="common">Mouse-ear cress</name>
    <dbReference type="NCBI Taxonomy" id="3702"/>
    <lineage>
        <taxon>Eukaryota</taxon>
        <taxon>Viridiplantae</taxon>
        <taxon>Streptophyta</taxon>
        <taxon>Embryophyta</taxon>
        <taxon>Tracheophyta</taxon>
        <taxon>Spermatophyta</taxon>
        <taxon>Magnoliopsida</taxon>
        <taxon>eudicotyledons</taxon>
        <taxon>Gunneridae</taxon>
        <taxon>Pentapetalae</taxon>
        <taxon>rosids</taxon>
        <taxon>malvids</taxon>
        <taxon>Brassicales</taxon>
        <taxon>Brassicaceae</taxon>
        <taxon>Camelineae</taxon>
        <taxon>Arabidopsis</taxon>
    </lineage>
</organism>
<name>FUT5_ARATH</name>
<gene>
    <name type="primary">FUT5</name>
    <name type="ordered locus">At2g15370</name>
    <name type="ORF">F26H6.11</name>
</gene>
<sequence>MYQKFQISGKIVKTLGLKMKVLIAVSFGSLLFILSYSNNFNNKLLDATTKVDIKETEKPVDKLIGGLLTADFDEGSCLSRYHKYFLYRKPSPYKPSEYLVSKLRSYEMLHKRCGPDTEYYKEAIEKLSRDDASESNGECRYIVWVAGYGLGNRLLTLASVFLYALLTERIILVDNRKDVSDLLCEPFPGTSWLLPLDFPMLNYTYAWGYNKEYPRCYGTMSEKHSINSTSIPPHLYMHNLHDSRDSDKLFVCQKDQSLIDKVPWLIVQANVYFVPSLWFNPTFQTELVKLFPQKETVFHHLARYLFHPTNEVWDMVTDYYHAHLSKADERLGIQIRVFGKPDGRFKHVIDQVISCTQREKLLPEFATPEESKVNISKTPKLKSVLVASLYPEFSGNLTNMFSKRPSSTGEIVEVYQPSGERVQQTDKKSHDQKALAEMYLLSLTDNIVTSARSTFGYVSYSLGGLKPWLLYQPTNFTTPNPPCVRSKSMEPCYLTPPSHGCEADWGTNSGKILPFVRHCEDLIYGGLKLYDEF</sequence>
<keyword id="KW-0961">Cell wall biogenesis/degradation</keyword>
<keyword id="KW-0325">Glycoprotein</keyword>
<keyword id="KW-0328">Glycosyltransferase</keyword>
<keyword id="KW-0333">Golgi apparatus</keyword>
<keyword id="KW-0472">Membrane</keyword>
<keyword id="KW-1185">Reference proteome</keyword>
<keyword id="KW-0735">Signal-anchor</keyword>
<keyword id="KW-0808">Transferase</keyword>
<keyword id="KW-0812">Transmembrane</keyword>
<keyword id="KW-1133">Transmembrane helix</keyword>
<protein>
    <recommendedName>
        <fullName>Probable fucosyltransferase 5</fullName>
        <shortName>AtFUT5</shortName>
        <ecNumber>2.4.1.-</ecNumber>
    </recommendedName>
</protein>
<reference key="1">
    <citation type="journal article" date="2001" name="Plant Physiol.">
        <title>Characterization of a family of Arabidopsis genes related to xyloglucan fucosyltransferase1.</title>
        <authorList>
            <person name="Sarria R."/>
            <person name="Wagner T.A."/>
            <person name="O'Neill M.A."/>
            <person name="Faik A."/>
            <person name="Wilkerson C.G."/>
            <person name="Keegstra K."/>
            <person name="Raikhel N.V."/>
        </authorList>
    </citation>
    <scope>NUCLEOTIDE SEQUENCE [MRNA]</scope>
</reference>
<reference key="2">
    <citation type="journal article" date="1999" name="Nature">
        <title>Sequence and analysis of chromosome 2 of the plant Arabidopsis thaliana.</title>
        <authorList>
            <person name="Lin X."/>
            <person name="Kaul S."/>
            <person name="Rounsley S.D."/>
            <person name="Shea T.P."/>
            <person name="Benito M.-I."/>
            <person name="Town C.D."/>
            <person name="Fujii C.Y."/>
            <person name="Mason T.M."/>
            <person name="Bowman C.L."/>
            <person name="Barnstead M.E."/>
            <person name="Feldblyum T.V."/>
            <person name="Buell C.R."/>
            <person name="Ketchum K.A."/>
            <person name="Lee J.J."/>
            <person name="Ronning C.M."/>
            <person name="Koo H.L."/>
            <person name="Moffat K.S."/>
            <person name="Cronin L.A."/>
            <person name="Shen M."/>
            <person name="Pai G."/>
            <person name="Van Aken S."/>
            <person name="Umayam L."/>
            <person name="Tallon L.J."/>
            <person name="Gill J.E."/>
            <person name="Adams M.D."/>
            <person name="Carrera A.J."/>
            <person name="Creasy T.H."/>
            <person name="Goodman H.M."/>
            <person name="Somerville C.R."/>
            <person name="Copenhaver G.P."/>
            <person name="Preuss D."/>
            <person name="Nierman W.C."/>
            <person name="White O."/>
            <person name="Eisen J.A."/>
            <person name="Salzberg S.L."/>
            <person name="Fraser C.M."/>
            <person name="Venter J.C."/>
        </authorList>
    </citation>
    <scope>NUCLEOTIDE SEQUENCE [LARGE SCALE GENOMIC DNA]</scope>
    <source>
        <strain>cv. Columbia</strain>
    </source>
</reference>
<reference key="3">
    <citation type="journal article" date="2017" name="Plant J.">
        <title>Araport11: a complete reannotation of the Arabidopsis thaliana reference genome.</title>
        <authorList>
            <person name="Cheng C.Y."/>
            <person name="Krishnakumar V."/>
            <person name="Chan A.P."/>
            <person name="Thibaud-Nissen F."/>
            <person name="Schobel S."/>
            <person name="Town C.D."/>
        </authorList>
    </citation>
    <scope>GENOME REANNOTATION</scope>
    <source>
        <strain>cv. Columbia</strain>
    </source>
</reference>
<accession>Q9SJP4</accession>